<protein>
    <recommendedName>
        <fullName evidence="1">Putative pre-16S rRNA nuclease</fullName>
        <ecNumber evidence="1">3.1.-.-</ecNumber>
    </recommendedName>
</protein>
<evidence type="ECO:0000255" key="1">
    <source>
        <dbReference type="HAMAP-Rule" id="MF_00651"/>
    </source>
</evidence>
<organism>
    <name type="scientific">Klebsiella pneumoniae subsp. pneumoniae (strain ATCC 700721 / MGH 78578)</name>
    <dbReference type="NCBI Taxonomy" id="272620"/>
    <lineage>
        <taxon>Bacteria</taxon>
        <taxon>Pseudomonadati</taxon>
        <taxon>Pseudomonadota</taxon>
        <taxon>Gammaproteobacteria</taxon>
        <taxon>Enterobacterales</taxon>
        <taxon>Enterobacteriaceae</taxon>
        <taxon>Klebsiella/Raoultella group</taxon>
        <taxon>Klebsiella</taxon>
        <taxon>Klebsiella pneumoniae complex</taxon>
    </lineage>
</organism>
<gene>
    <name evidence="1" type="primary">yqgF</name>
    <name type="ordered locus">KPN78578_33180</name>
    <name type="ORF">KPN_03382</name>
</gene>
<reference key="1">
    <citation type="submission" date="2006-09" db="EMBL/GenBank/DDBJ databases">
        <authorList>
            <consortium name="The Klebsiella pneumonia Genome Sequencing Project"/>
            <person name="McClelland M."/>
            <person name="Sanderson E.K."/>
            <person name="Spieth J."/>
            <person name="Clifton W.S."/>
            <person name="Latreille P."/>
            <person name="Sabo A."/>
            <person name="Pepin K."/>
            <person name="Bhonagiri V."/>
            <person name="Porwollik S."/>
            <person name="Ali J."/>
            <person name="Wilson R.K."/>
        </authorList>
    </citation>
    <scope>NUCLEOTIDE SEQUENCE [LARGE SCALE GENOMIC DNA]</scope>
    <source>
        <strain>ATCC 700721 / MGH 78578</strain>
    </source>
</reference>
<comment type="function">
    <text evidence="1">Could be a nuclease involved in processing of the 5'-end of pre-16S rRNA.</text>
</comment>
<comment type="subcellular location">
    <subcellularLocation>
        <location evidence="1">Cytoplasm</location>
    </subcellularLocation>
</comment>
<comment type="similarity">
    <text evidence="1">Belongs to the YqgF nuclease family.</text>
</comment>
<dbReference type="EC" id="3.1.-.-" evidence="1"/>
<dbReference type="EMBL" id="CP000647">
    <property type="protein sequence ID" value="ABR78779.1"/>
    <property type="molecule type" value="Genomic_DNA"/>
</dbReference>
<dbReference type="SMR" id="A6TDV8"/>
<dbReference type="STRING" id="272620.KPN_03382"/>
<dbReference type="PaxDb" id="272620-KPN_03382"/>
<dbReference type="EnsemblBacteria" id="ABR78779">
    <property type="protein sequence ID" value="ABR78779"/>
    <property type="gene ID" value="KPN_03382"/>
</dbReference>
<dbReference type="KEGG" id="kpn:KPN_03382"/>
<dbReference type="HOGENOM" id="CLU_098240_3_0_6"/>
<dbReference type="Proteomes" id="UP000000265">
    <property type="component" value="Chromosome"/>
</dbReference>
<dbReference type="GO" id="GO:0005829">
    <property type="term" value="C:cytosol"/>
    <property type="evidence" value="ECO:0007669"/>
    <property type="project" value="TreeGrafter"/>
</dbReference>
<dbReference type="GO" id="GO:0004518">
    <property type="term" value="F:nuclease activity"/>
    <property type="evidence" value="ECO:0007669"/>
    <property type="project" value="UniProtKB-KW"/>
</dbReference>
<dbReference type="GO" id="GO:0000967">
    <property type="term" value="P:rRNA 5'-end processing"/>
    <property type="evidence" value="ECO:0007669"/>
    <property type="project" value="UniProtKB-UniRule"/>
</dbReference>
<dbReference type="CDD" id="cd16964">
    <property type="entry name" value="YqgF"/>
    <property type="match status" value="1"/>
</dbReference>
<dbReference type="FunFam" id="3.30.420.140:FF:000002">
    <property type="entry name" value="Putative pre-16S rRNA nuclease"/>
    <property type="match status" value="1"/>
</dbReference>
<dbReference type="Gene3D" id="3.30.420.140">
    <property type="entry name" value="YqgF/RNase H-like domain"/>
    <property type="match status" value="1"/>
</dbReference>
<dbReference type="HAMAP" id="MF_00651">
    <property type="entry name" value="Nuclease_YqgF"/>
    <property type="match status" value="1"/>
</dbReference>
<dbReference type="InterPro" id="IPR012337">
    <property type="entry name" value="RNaseH-like_sf"/>
</dbReference>
<dbReference type="InterPro" id="IPR005227">
    <property type="entry name" value="YqgF"/>
</dbReference>
<dbReference type="InterPro" id="IPR006641">
    <property type="entry name" value="YqgF/RNaseH-like_dom"/>
</dbReference>
<dbReference type="InterPro" id="IPR037027">
    <property type="entry name" value="YqgF/RNaseH-like_dom_sf"/>
</dbReference>
<dbReference type="NCBIfam" id="TIGR00250">
    <property type="entry name" value="RNAse_H_YqgF"/>
    <property type="match status" value="1"/>
</dbReference>
<dbReference type="PANTHER" id="PTHR33317">
    <property type="entry name" value="POLYNUCLEOTIDYL TRANSFERASE, RIBONUCLEASE H-LIKE SUPERFAMILY PROTEIN"/>
    <property type="match status" value="1"/>
</dbReference>
<dbReference type="PANTHER" id="PTHR33317:SF4">
    <property type="entry name" value="POLYNUCLEOTIDYL TRANSFERASE, RIBONUCLEASE H-LIKE SUPERFAMILY PROTEIN"/>
    <property type="match status" value="1"/>
</dbReference>
<dbReference type="Pfam" id="PF03652">
    <property type="entry name" value="RuvX"/>
    <property type="match status" value="1"/>
</dbReference>
<dbReference type="SMART" id="SM00732">
    <property type="entry name" value="YqgFc"/>
    <property type="match status" value="1"/>
</dbReference>
<dbReference type="SUPFAM" id="SSF53098">
    <property type="entry name" value="Ribonuclease H-like"/>
    <property type="match status" value="1"/>
</dbReference>
<keyword id="KW-0963">Cytoplasm</keyword>
<keyword id="KW-0378">Hydrolase</keyword>
<keyword id="KW-0540">Nuclease</keyword>
<keyword id="KW-0690">Ribosome biogenesis</keyword>
<proteinExistence type="inferred from homology"/>
<accession>A6TDV8</accession>
<name>YQGF_KLEP7</name>
<feature type="chain" id="PRO_1000061525" description="Putative pre-16S rRNA nuclease">
    <location>
        <begin position="1"/>
        <end position="138"/>
    </location>
</feature>
<sequence length="138" mass="14998">MSGTFLGFDFGTKSIGVAVGQRITATARPLPALKAQDGKPDWNVIEKLLKEWQPEAVIVGLPLNMDGTEQPLTARARNFANKIHGRFGVAILLHDERLSTVEARAGLFEHGGYRALNKGSVDSASAVVILESYFEQSF</sequence>